<keyword id="KW-0119">Carbohydrate metabolism</keyword>
<keyword id="KW-0325">Glycoprotein</keyword>
<keyword id="KW-0326">Glycosidase</keyword>
<keyword id="KW-0378">Hydrolase</keyword>
<keyword id="KW-0624">Polysaccharide degradation</keyword>
<keyword id="KW-1185">Reference proteome</keyword>
<keyword id="KW-0964">Secreted</keyword>
<keyword id="KW-0732">Signal</keyword>
<feature type="signal peptide" evidence="2">
    <location>
        <begin position="1"/>
        <end position="19"/>
    </location>
</feature>
<feature type="chain" id="PRO_0000394601" description="Probable alpha-L-arabinofuranosidase A">
    <location>
        <begin position="20"/>
        <end position="565"/>
    </location>
</feature>
<feature type="glycosylation site" description="N-linked (GlcNAc...) asparagine" evidence="2">
    <location>
        <position position="71"/>
    </location>
</feature>
<feature type="glycosylation site" description="N-linked (GlcNAc...) asparagine" evidence="2">
    <location>
        <position position="91"/>
    </location>
</feature>
<feature type="glycosylation site" description="N-linked (GlcNAc...) asparagine" evidence="2">
    <location>
        <position position="128"/>
    </location>
</feature>
<feature type="glycosylation site" description="N-linked (GlcNAc...) asparagine" evidence="2">
    <location>
        <position position="303"/>
    </location>
</feature>
<feature type="glycosylation site" description="N-linked (GlcNAc...) asparagine" evidence="2">
    <location>
        <position position="362"/>
    </location>
</feature>
<feature type="glycosylation site" description="N-linked (GlcNAc...) asparagine" evidence="2">
    <location>
        <position position="486"/>
    </location>
</feature>
<feature type="glycosylation site" description="N-linked (GlcNAc...) asparagine" evidence="2">
    <location>
        <position position="501"/>
    </location>
</feature>
<accession>Q5BA89</accession>
<accession>C8VPS5</accession>
<name>ABFA_EMENI</name>
<evidence type="ECO:0000250" key="1"/>
<evidence type="ECO:0000255" key="2"/>
<evidence type="ECO:0000305" key="3"/>
<gene>
    <name type="primary">abfA</name>
    <name type="ORF">AN2541</name>
</gene>
<sequence>MPLSAAIKSSLSVSVRADAKGLVGFANTGYNGITVLKQTYWTSFYMKGEYSGTVLLRLTGTDSGTVYGSRNLSVKSTGGKWTQYETTFEANESYVAENEWQLLFDAATAKGHPLHFGLVQLFPPTYKNRTNGLRNDIARPIADLKPKFLRFPGGNNIQADRPGDWHYPNTDALGLDEYLWWCEDMDMVPVLSVWDGKSYGGIVSGEELQPYLDDIKDELEVTLPLTLLSHPLRAYLTPNTNEQYLLGPPSTPFGALRARNGHPDPWPIQYIEIGNEDDYSGGCDTYPDRLVQIYDTIHASYPNLTLIANNMDENCLPEIPLPGLWHDYHYYRSADDLVAMFNYWDNHDRGDRVLVGEYGCRNDSNPDGVFWSFMQGSCAEAVHMIGLERNSDVVMMAAYAPLLQHFGYTQWSVCTPSASLAYLGIHPADRGEEQPTLFGFESRPNSLTLSTSYYVNRMFSTNQGSTVHKVHSTAGFGPLYWVATSNETAYQVKLANYGAANQTVNIRVPGVGRGVLEMISGPKDASNLPGDIKIVPVSRNIRAGKEGYTVHMPPWGVAVLVVVFK</sequence>
<protein>
    <recommendedName>
        <fullName>Probable alpha-L-arabinofuranosidase A</fullName>
        <shortName>ABF A</shortName>
        <shortName>Arabinosidase A</shortName>
        <ecNumber>3.2.1.55</ecNumber>
    </recommendedName>
</protein>
<dbReference type="EC" id="3.2.1.55"/>
<dbReference type="EMBL" id="AACD01000043">
    <property type="protein sequence ID" value="EAA64646.1"/>
    <property type="molecule type" value="Genomic_DNA"/>
</dbReference>
<dbReference type="EMBL" id="BN001307">
    <property type="protein sequence ID" value="CBF87061.1"/>
    <property type="molecule type" value="Genomic_DNA"/>
</dbReference>
<dbReference type="RefSeq" id="XP_660145.1">
    <property type="nucleotide sequence ID" value="XM_655053.1"/>
</dbReference>
<dbReference type="SMR" id="Q5BA89"/>
<dbReference type="STRING" id="227321.Q5BA89"/>
<dbReference type="CAZy" id="GH51">
    <property type="family name" value="Glycoside Hydrolase Family 51"/>
</dbReference>
<dbReference type="GlyCosmos" id="Q5BA89">
    <property type="glycosylation" value="7 sites, No reported glycans"/>
</dbReference>
<dbReference type="EnsemblFungi" id="CBF87061">
    <property type="protein sequence ID" value="CBF87061"/>
    <property type="gene ID" value="ANIA_02541"/>
</dbReference>
<dbReference type="KEGG" id="ani:ANIA_02541"/>
<dbReference type="VEuPathDB" id="FungiDB:AN2541"/>
<dbReference type="eggNOG" id="ENOG502QQEX">
    <property type="taxonomic scope" value="Eukaryota"/>
</dbReference>
<dbReference type="HOGENOM" id="CLU_010060_1_1_1"/>
<dbReference type="InParanoid" id="Q5BA89"/>
<dbReference type="OMA" id="PGRESDW"/>
<dbReference type="OrthoDB" id="406864at2759"/>
<dbReference type="UniPathway" id="UPA00667"/>
<dbReference type="Proteomes" id="UP000000560">
    <property type="component" value="Chromosome VII"/>
</dbReference>
<dbReference type="GO" id="GO:0005576">
    <property type="term" value="C:extracellular region"/>
    <property type="evidence" value="ECO:0000250"/>
    <property type="project" value="UniProtKB"/>
</dbReference>
<dbReference type="GO" id="GO:0046556">
    <property type="term" value="F:alpha-L-arabinofuranosidase activity"/>
    <property type="evidence" value="ECO:0000250"/>
    <property type="project" value="UniProtKB"/>
</dbReference>
<dbReference type="GO" id="GO:0031222">
    <property type="term" value="P:arabinan catabolic process"/>
    <property type="evidence" value="ECO:0007669"/>
    <property type="project" value="UniProtKB-UniPathway"/>
</dbReference>
<dbReference type="GO" id="GO:0019566">
    <property type="term" value="P:arabinose metabolic process"/>
    <property type="evidence" value="ECO:0000250"/>
    <property type="project" value="UniProtKB"/>
</dbReference>
<dbReference type="GO" id="GO:0046373">
    <property type="term" value="P:L-arabinose metabolic process"/>
    <property type="evidence" value="ECO:0007669"/>
    <property type="project" value="InterPro"/>
</dbReference>
<dbReference type="FunFam" id="3.20.20.80:FF:000322">
    <property type="entry name" value="Probable alpha-L-arabinofuranosidase A"/>
    <property type="match status" value="1"/>
</dbReference>
<dbReference type="Gene3D" id="2.60.120.260">
    <property type="entry name" value="Galactose-binding domain-like"/>
    <property type="match status" value="1"/>
</dbReference>
<dbReference type="Gene3D" id="3.20.20.80">
    <property type="entry name" value="Glycosidases"/>
    <property type="match status" value="1"/>
</dbReference>
<dbReference type="InterPro" id="IPR010720">
    <property type="entry name" value="Alpha-L-AF_C"/>
</dbReference>
<dbReference type="InterPro" id="IPR008979">
    <property type="entry name" value="Galactose-bd-like_sf"/>
</dbReference>
<dbReference type="InterPro" id="IPR017853">
    <property type="entry name" value="Glycoside_hydrolase_SF"/>
</dbReference>
<dbReference type="InterPro" id="IPR051563">
    <property type="entry name" value="Glycosyl_Hydrolase_51"/>
</dbReference>
<dbReference type="PANTHER" id="PTHR31776">
    <property type="entry name" value="ALPHA-L-ARABINOFURANOSIDASE 1"/>
    <property type="match status" value="1"/>
</dbReference>
<dbReference type="PANTHER" id="PTHR31776:SF0">
    <property type="entry name" value="ALPHA-L-ARABINOFURANOSIDASE 1"/>
    <property type="match status" value="1"/>
</dbReference>
<dbReference type="Pfam" id="PF06964">
    <property type="entry name" value="Alpha-L-AF_C"/>
    <property type="match status" value="1"/>
</dbReference>
<dbReference type="SMART" id="SM00813">
    <property type="entry name" value="Alpha-L-AF_C"/>
    <property type="match status" value="1"/>
</dbReference>
<dbReference type="SUPFAM" id="SSF51445">
    <property type="entry name" value="(Trans)glycosidases"/>
    <property type="match status" value="1"/>
</dbReference>
<dbReference type="SUPFAM" id="SSF49785">
    <property type="entry name" value="Galactose-binding domain-like"/>
    <property type="match status" value="1"/>
</dbReference>
<organism>
    <name type="scientific">Emericella nidulans (strain FGSC A4 / ATCC 38163 / CBS 112.46 / NRRL 194 / M139)</name>
    <name type="common">Aspergillus nidulans</name>
    <dbReference type="NCBI Taxonomy" id="227321"/>
    <lineage>
        <taxon>Eukaryota</taxon>
        <taxon>Fungi</taxon>
        <taxon>Dikarya</taxon>
        <taxon>Ascomycota</taxon>
        <taxon>Pezizomycotina</taxon>
        <taxon>Eurotiomycetes</taxon>
        <taxon>Eurotiomycetidae</taxon>
        <taxon>Eurotiales</taxon>
        <taxon>Aspergillaceae</taxon>
        <taxon>Aspergillus</taxon>
        <taxon>Aspergillus subgen. Nidulantes</taxon>
    </lineage>
</organism>
<comment type="function">
    <text evidence="1">Alpha-L-arabinofuranosidase involved in the degradation of arabinoxylan, a major component of plant hemicellulose. Acts only on small linear 1,5-alpha-linked L-arabinofuranosyl oligosaccharides (By similarity).</text>
</comment>
<comment type="catalytic activity">
    <reaction>
        <text>Hydrolysis of terminal non-reducing alpha-L-arabinofuranoside residues in alpha-L-arabinosides.</text>
        <dbReference type="EC" id="3.2.1.55"/>
    </reaction>
</comment>
<comment type="pathway">
    <text>Glycan metabolism; L-arabinan degradation.</text>
</comment>
<comment type="subcellular location">
    <subcellularLocation>
        <location evidence="1">Secreted</location>
    </subcellularLocation>
</comment>
<comment type="similarity">
    <text evidence="3">Belongs to the glycosyl hydrolase 51 family.</text>
</comment>
<reference key="1">
    <citation type="journal article" date="2005" name="Nature">
        <title>Sequencing of Aspergillus nidulans and comparative analysis with A. fumigatus and A. oryzae.</title>
        <authorList>
            <person name="Galagan J.E."/>
            <person name="Calvo S.E."/>
            <person name="Cuomo C."/>
            <person name="Ma L.-J."/>
            <person name="Wortman J.R."/>
            <person name="Batzoglou S."/>
            <person name="Lee S.-I."/>
            <person name="Bastuerkmen M."/>
            <person name="Spevak C.C."/>
            <person name="Clutterbuck J."/>
            <person name="Kapitonov V."/>
            <person name="Jurka J."/>
            <person name="Scazzocchio C."/>
            <person name="Farman M.L."/>
            <person name="Butler J."/>
            <person name="Purcell S."/>
            <person name="Harris S."/>
            <person name="Braus G.H."/>
            <person name="Draht O."/>
            <person name="Busch S."/>
            <person name="D'Enfert C."/>
            <person name="Bouchier C."/>
            <person name="Goldman G.H."/>
            <person name="Bell-Pedersen D."/>
            <person name="Griffiths-Jones S."/>
            <person name="Doonan J.H."/>
            <person name="Yu J."/>
            <person name="Vienken K."/>
            <person name="Pain A."/>
            <person name="Freitag M."/>
            <person name="Selker E.U."/>
            <person name="Archer D.B."/>
            <person name="Penalva M.A."/>
            <person name="Oakley B.R."/>
            <person name="Momany M."/>
            <person name="Tanaka T."/>
            <person name="Kumagai T."/>
            <person name="Asai K."/>
            <person name="Machida M."/>
            <person name="Nierman W.C."/>
            <person name="Denning D.W."/>
            <person name="Caddick M.X."/>
            <person name="Hynes M."/>
            <person name="Paoletti M."/>
            <person name="Fischer R."/>
            <person name="Miller B.L."/>
            <person name="Dyer P.S."/>
            <person name="Sachs M.S."/>
            <person name="Osmani S.A."/>
            <person name="Birren B.W."/>
        </authorList>
    </citation>
    <scope>NUCLEOTIDE SEQUENCE [LARGE SCALE GENOMIC DNA]</scope>
    <source>
        <strain>FGSC A4 / ATCC 38163 / CBS 112.46 / NRRL 194 / M139</strain>
    </source>
</reference>
<reference key="2">
    <citation type="journal article" date="2009" name="Fungal Genet. Biol.">
        <title>The 2008 update of the Aspergillus nidulans genome annotation: a community effort.</title>
        <authorList>
            <person name="Wortman J.R."/>
            <person name="Gilsenan J.M."/>
            <person name="Joardar V."/>
            <person name="Deegan J."/>
            <person name="Clutterbuck J."/>
            <person name="Andersen M.R."/>
            <person name="Archer D."/>
            <person name="Bencina M."/>
            <person name="Braus G."/>
            <person name="Coutinho P."/>
            <person name="von Dohren H."/>
            <person name="Doonan J."/>
            <person name="Driessen A.J."/>
            <person name="Durek P."/>
            <person name="Espeso E."/>
            <person name="Fekete E."/>
            <person name="Flipphi M."/>
            <person name="Estrada C.G."/>
            <person name="Geysens S."/>
            <person name="Goldman G."/>
            <person name="de Groot P.W."/>
            <person name="Hansen K."/>
            <person name="Harris S.D."/>
            <person name="Heinekamp T."/>
            <person name="Helmstaedt K."/>
            <person name="Henrissat B."/>
            <person name="Hofmann G."/>
            <person name="Homan T."/>
            <person name="Horio T."/>
            <person name="Horiuchi H."/>
            <person name="James S."/>
            <person name="Jones M."/>
            <person name="Karaffa L."/>
            <person name="Karanyi Z."/>
            <person name="Kato M."/>
            <person name="Keller N."/>
            <person name="Kelly D.E."/>
            <person name="Kiel J.A."/>
            <person name="Kim J.M."/>
            <person name="van der Klei I.J."/>
            <person name="Klis F.M."/>
            <person name="Kovalchuk A."/>
            <person name="Krasevec N."/>
            <person name="Kubicek C.P."/>
            <person name="Liu B."/>
            <person name="Maccabe A."/>
            <person name="Meyer V."/>
            <person name="Mirabito P."/>
            <person name="Miskei M."/>
            <person name="Mos M."/>
            <person name="Mullins J."/>
            <person name="Nelson D.R."/>
            <person name="Nielsen J."/>
            <person name="Oakley B.R."/>
            <person name="Osmani S.A."/>
            <person name="Pakula T."/>
            <person name="Paszewski A."/>
            <person name="Paulsen I."/>
            <person name="Pilsyk S."/>
            <person name="Pocsi I."/>
            <person name="Punt P.J."/>
            <person name="Ram A.F."/>
            <person name="Ren Q."/>
            <person name="Robellet X."/>
            <person name="Robson G."/>
            <person name="Seiboth B."/>
            <person name="van Solingen P."/>
            <person name="Specht T."/>
            <person name="Sun J."/>
            <person name="Taheri-Talesh N."/>
            <person name="Takeshita N."/>
            <person name="Ussery D."/>
            <person name="vanKuyk P.A."/>
            <person name="Visser H."/>
            <person name="van de Vondervoort P.J."/>
            <person name="de Vries R.P."/>
            <person name="Walton J."/>
            <person name="Xiang X."/>
            <person name="Xiong Y."/>
            <person name="Zeng A.P."/>
            <person name="Brandt B.W."/>
            <person name="Cornell M.J."/>
            <person name="van den Hondel C.A."/>
            <person name="Visser J."/>
            <person name="Oliver S.G."/>
            <person name="Turner G."/>
        </authorList>
    </citation>
    <scope>GENOME REANNOTATION</scope>
    <source>
        <strain>FGSC A4 / ATCC 38163 / CBS 112.46 / NRRL 194 / M139</strain>
    </source>
</reference>
<proteinExistence type="inferred from homology"/>